<reference key="1">
    <citation type="journal article" date="1996" name="Microbiology">
        <title>Systematic sequencing of the 283 kb 210 degrees-232 degrees region of the Bacillus subtilis genome containing the skin element and many sporulation genes.</title>
        <authorList>
            <person name="Mizuno M."/>
            <person name="Masuda S."/>
            <person name="Takemaru K."/>
            <person name="Hosono S."/>
            <person name="Sato T."/>
            <person name="Takeuchi M."/>
            <person name="Kobayashi Y."/>
        </authorList>
    </citation>
    <scope>NUCLEOTIDE SEQUENCE [GENOMIC DNA]</scope>
    <source>
        <strain>168 / JH642</strain>
    </source>
</reference>
<reference key="2">
    <citation type="journal article" date="1997" name="Nature">
        <title>The complete genome sequence of the Gram-positive bacterium Bacillus subtilis.</title>
        <authorList>
            <person name="Kunst F."/>
            <person name="Ogasawara N."/>
            <person name="Moszer I."/>
            <person name="Albertini A.M."/>
            <person name="Alloni G."/>
            <person name="Azevedo V."/>
            <person name="Bertero M.G."/>
            <person name="Bessieres P."/>
            <person name="Bolotin A."/>
            <person name="Borchert S."/>
            <person name="Borriss R."/>
            <person name="Boursier L."/>
            <person name="Brans A."/>
            <person name="Braun M."/>
            <person name="Brignell S.C."/>
            <person name="Bron S."/>
            <person name="Brouillet S."/>
            <person name="Bruschi C.V."/>
            <person name="Caldwell B."/>
            <person name="Capuano V."/>
            <person name="Carter N.M."/>
            <person name="Choi S.-K."/>
            <person name="Codani J.-J."/>
            <person name="Connerton I.F."/>
            <person name="Cummings N.J."/>
            <person name="Daniel R.A."/>
            <person name="Denizot F."/>
            <person name="Devine K.M."/>
            <person name="Duesterhoeft A."/>
            <person name="Ehrlich S.D."/>
            <person name="Emmerson P.T."/>
            <person name="Entian K.-D."/>
            <person name="Errington J."/>
            <person name="Fabret C."/>
            <person name="Ferrari E."/>
            <person name="Foulger D."/>
            <person name="Fritz C."/>
            <person name="Fujita M."/>
            <person name="Fujita Y."/>
            <person name="Fuma S."/>
            <person name="Galizzi A."/>
            <person name="Galleron N."/>
            <person name="Ghim S.-Y."/>
            <person name="Glaser P."/>
            <person name="Goffeau A."/>
            <person name="Golightly E.J."/>
            <person name="Grandi G."/>
            <person name="Guiseppi G."/>
            <person name="Guy B.J."/>
            <person name="Haga K."/>
            <person name="Haiech J."/>
            <person name="Harwood C.R."/>
            <person name="Henaut A."/>
            <person name="Hilbert H."/>
            <person name="Holsappel S."/>
            <person name="Hosono S."/>
            <person name="Hullo M.-F."/>
            <person name="Itaya M."/>
            <person name="Jones L.-M."/>
            <person name="Joris B."/>
            <person name="Karamata D."/>
            <person name="Kasahara Y."/>
            <person name="Klaerr-Blanchard M."/>
            <person name="Klein C."/>
            <person name="Kobayashi Y."/>
            <person name="Koetter P."/>
            <person name="Koningstein G."/>
            <person name="Krogh S."/>
            <person name="Kumano M."/>
            <person name="Kurita K."/>
            <person name="Lapidus A."/>
            <person name="Lardinois S."/>
            <person name="Lauber J."/>
            <person name="Lazarevic V."/>
            <person name="Lee S.-M."/>
            <person name="Levine A."/>
            <person name="Liu H."/>
            <person name="Masuda S."/>
            <person name="Mauel C."/>
            <person name="Medigue C."/>
            <person name="Medina N."/>
            <person name="Mellado R.P."/>
            <person name="Mizuno M."/>
            <person name="Moestl D."/>
            <person name="Nakai S."/>
            <person name="Noback M."/>
            <person name="Noone D."/>
            <person name="O'Reilly M."/>
            <person name="Ogawa K."/>
            <person name="Ogiwara A."/>
            <person name="Oudega B."/>
            <person name="Park S.-H."/>
            <person name="Parro V."/>
            <person name="Pohl T.M."/>
            <person name="Portetelle D."/>
            <person name="Porwollik S."/>
            <person name="Prescott A.M."/>
            <person name="Presecan E."/>
            <person name="Pujic P."/>
            <person name="Purnelle B."/>
            <person name="Rapoport G."/>
            <person name="Rey M."/>
            <person name="Reynolds S."/>
            <person name="Rieger M."/>
            <person name="Rivolta C."/>
            <person name="Rocha E."/>
            <person name="Roche B."/>
            <person name="Rose M."/>
            <person name="Sadaie Y."/>
            <person name="Sato T."/>
            <person name="Scanlan E."/>
            <person name="Schleich S."/>
            <person name="Schroeter R."/>
            <person name="Scoffone F."/>
            <person name="Sekiguchi J."/>
            <person name="Sekowska A."/>
            <person name="Seror S.J."/>
            <person name="Serror P."/>
            <person name="Shin B.-S."/>
            <person name="Soldo B."/>
            <person name="Sorokin A."/>
            <person name="Tacconi E."/>
            <person name="Takagi T."/>
            <person name="Takahashi H."/>
            <person name="Takemaru K."/>
            <person name="Takeuchi M."/>
            <person name="Tamakoshi A."/>
            <person name="Tanaka T."/>
            <person name="Terpstra P."/>
            <person name="Tognoni A."/>
            <person name="Tosato V."/>
            <person name="Uchiyama S."/>
            <person name="Vandenbol M."/>
            <person name="Vannier F."/>
            <person name="Vassarotti A."/>
            <person name="Viari A."/>
            <person name="Wambutt R."/>
            <person name="Wedler E."/>
            <person name="Wedler H."/>
            <person name="Weitzenegger T."/>
            <person name="Winters P."/>
            <person name="Wipat A."/>
            <person name="Yamamoto H."/>
            <person name="Yamane K."/>
            <person name="Yasumoto K."/>
            <person name="Yata K."/>
            <person name="Yoshida K."/>
            <person name="Yoshikawa H.-F."/>
            <person name="Zumstein E."/>
            <person name="Yoshikawa H."/>
            <person name="Danchin A."/>
        </authorList>
    </citation>
    <scope>NUCLEOTIDE SEQUENCE [LARGE SCALE GENOMIC DNA]</scope>
    <source>
        <strain>168</strain>
    </source>
</reference>
<gene>
    <name type="primary">yqfT</name>
    <name type="ordered locus">BSU25120</name>
</gene>
<feature type="chain" id="PRO_0000049800" description="Uncharacterized protein YqfT">
    <location>
        <begin position="1"/>
        <end position="84"/>
    </location>
</feature>
<keyword id="KW-1185">Reference proteome</keyword>
<sequence length="84" mass="9742">MILFQRIILQRLNQATADDLLKYSKQYGISLTRSQAVEVANLLYGKNVNIFNESERMRLLKQVETITSKETAQTVNELFKQFTS</sequence>
<accession>P54477</accession>
<dbReference type="EMBL" id="D84432">
    <property type="protein sequence ID" value="BAA12497.1"/>
    <property type="molecule type" value="Genomic_DNA"/>
</dbReference>
<dbReference type="EMBL" id="AL009126">
    <property type="protein sequence ID" value="CAB14442.1"/>
    <property type="molecule type" value="Genomic_DNA"/>
</dbReference>
<dbReference type="PIR" id="F69954">
    <property type="entry name" value="F69954"/>
</dbReference>
<dbReference type="RefSeq" id="NP_390391.1">
    <property type="nucleotide sequence ID" value="NC_000964.3"/>
</dbReference>
<dbReference type="RefSeq" id="WP_003230076.1">
    <property type="nucleotide sequence ID" value="NZ_OZ025638.1"/>
</dbReference>
<dbReference type="SMR" id="P54477"/>
<dbReference type="FunCoup" id="P54477">
    <property type="interactions" value="12"/>
</dbReference>
<dbReference type="STRING" id="224308.BSU25120"/>
<dbReference type="PaxDb" id="224308-BSU25120"/>
<dbReference type="EnsemblBacteria" id="CAB14442">
    <property type="protein sequence ID" value="CAB14442"/>
    <property type="gene ID" value="BSU_25120"/>
</dbReference>
<dbReference type="GeneID" id="937909"/>
<dbReference type="KEGG" id="bsu:BSU25120"/>
<dbReference type="PATRIC" id="fig|224308.179.peg.2731"/>
<dbReference type="eggNOG" id="ENOG50330GA">
    <property type="taxonomic scope" value="Bacteria"/>
</dbReference>
<dbReference type="InParanoid" id="P54477"/>
<dbReference type="OrthoDB" id="2969575at2"/>
<dbReference type="BioCyc" id="BSUB:BSU25120-MONOMER"/>
<dbReference type="Proteomes" id="UP000001570">
    <property type="component" value="Chromosome"/>
</dbReference>
<dbReference type="InterPro" id="IPR020277">
    <property type="entry name" value="DUF2624"/>
</dbReference>
<dbReference type="Pfam" id="PF11116">
    <property type="entry name" value="DUF2624"/>
    <property type="match status" value="1"/>
</dbReference>
<proteinExistence type="predicted"/>
<name>YQFT_BACSU</name>
<organism>
    <name type="scientific">Bacillus subtilis (strain 168)</name>
    <dbReference type="NCBI Taxonomy" id="224308"/>
    <lineage>
        <taxon>Bacteria</taxon>
        <taxon>Bacillati</taxon>
        <taxon>Bacillota</taxon>
        <taxon>Bacilli</taxon>
        <taxon>Bacillales</taxon>
        <taxon>Bacillaceae</taxon>
        <taxon>Bacillus</taxon>
    </lineage>
</organism>
<protein>
    <recommendedName>
        <fullName>Uncharacterized protein YqfT</fullName>
    </recommendedName>
</protein>